<gene>
    <name type="ORF">SPAPB24D3.02c</name>
</gene>
<name>YKM2_SCHPO</name>
<keyword id="KW-0029">Amino-acid transport</keyword>
<keyword id="KW-0325">Glycoprotein</keyword>
<keyword id="KW-0472">Membrane</keyword>
<keyword id="KW-1185">Reference proteome</keyword>
<keyword id="KW-0812">Transmembrane</keyword>
<keyword id="KW-1133">Transmembrane helix</keyword>
<keyword id="KW-0813">Transport</keyword>
<proteinExistence type="inferred from homology"/>
<organism>
    <name type="scientific">Schizosaccharomyces pombe (strain 972 / ATCC 24843)</name>
    <name type="common">Fission yeast</name>
    <dbReference type="NCBI Taxonomy" id="284812"/>
    <lineage>
        <taxon>Eukaryota</taxon>
        <taxon>Fungi</taxon>
        <taxon>Dikarya</taxon>
        <taxon>Ascomycota</taxon>
        <taxon>Taphrinomycotina</taxon>
        <taxon>Schizosaccharomycetes</taxon>
        <taxon>Schizosaccharomycetales</taxon>
        <taxon>Schizosaccharomycetaceae</taxon>
        <taxon>Schizosaccharomyces</taxon>
    </lineage>
</organism>
<comment type="subcellular location">
    <subcellularLocation>
        <location evidence="1">Membrane</location>
        <topology evidence="1">Multi-pass membrane protein</topology>
    </subcellularLocation>
</comment>
<comment type="similarity">
    <text evidence="1">Belongs to the amino acid-polyamine-organocation (APC) superfamily.</text>
</comment>
<protein>
    <recommendedName>
        <fullName>Uncharacterized amino-acid permease PB24D3.02c</fullName>
    </recommendedName>
</protein>
<reference evidence="2" key="1">
    <citation type="journal article" date="2002" name="Nature">
        <title>The genome sequence of Schizosaccharomyces pombe.</title>
        <authorList>
            <person name="Wood V."/>
            <person name="Gwilliam R."/>
            <person name="Rajandream M.A."/>
            <person name="Lyne M.H."/>
            <person name="Lyne R."/>
            <person name="Stewart A."/>
            <person name="Sgouros J.G."/>
            <person name="Peat N."/>
            <person name="Hayles J."/>
            <person name="Baker S.G."/>
            <person name="Basham D."/>
            <person name="Bowman S."/>
            <person name="Brooks K."/>
            <person name="Brown D."/>
            <person name="Brown S."/>
            <person name="Chillingworth T."/>
            <person name="Churcher C.M."/>
            <person name="Collins M."/>
            <person name="Connor R."/>
            <person name="Cronin A."/>
            <person name="Davis P."/>
            <person name="Feltwell T."/>
            <person name="Fraser A."/>
            <person name="Gentles S."/>
            <person name="Goble A."/>
            <person name="Hamlin N."/>
            <person name="Harris D.E."/>
            <person name="Hidalgo J."/>
            <person name="Hodgson G."/>
            <person name="Holroyd S."/>
            <person name="Hornsby T."/>
            <person name="Howarth S."/>
            <person name="Huckle E.J."/>
            <person name="Hunt S."/>
            <person name="Jagels K."/>
            <person name="James K.D."/>
            <person name="Jones L."/>
            <person name="Jones M."/>
            <person name="Leather S."/>
            <person name="McDonald S."/>
            <person name="McLean J."/>
            <person name="Mooney P."/>
            <person name="Moule S."/>
            <person name="Mungall K.L."/>
            <person name="Murphy L.D."/>
            <person name="Niblett D."/>
            <person name="Odell C."/>
            <person name="Oliver K."/>
            <person name="O'Neil S."/>
            <person name="Pearson D."/>
            <person name="Quail M.A."/>
            <person name="Rabbinowitsch E."/>
            <person name="Rutherford K.M."/>
            <person name="Rutter S."/>
            <person name="Saunders D."/>
            <person name="Seeger K."/>
            <person name="Sharp S."/>
            <person name="Skelton J."/>
            <person name="Simmonds M.N."/>
            <person name="Squares R."/>
            <person name="Squares S."/>
            <person name="Stevens K."/>
            <person name="Taylor K."/>
            <person name="Taylor R.G."/>
            <person name="Tivey A."/>
            <person name="Walsh S.V."/>
            <person name="Warren T."/>
            <person name="Whitehead S."/>
            <person name="Woodward J.R."/>
            <person name="Volckaert G."/>
            <person name="Aert R."/>
            <person name="Robben J."/>
            <person name="Grymonprez B."/>
            <person name="Weltjens I."/>
            <person name="Vanstreels E."/>
            <person name="Rieger M."/>
            <person name="Schaefer M."/>
            <person name="Mueller-Auer S."/>
            <person name="Gabel C."/>
            <person name="Fuchs M."/>
            <person name="Duesterhoeft A."/>
            <person name="Fritzc C."/>
            <person name="Holzer E."/>
            <person name="Moestl D."/>
            <person name="Hilbert H."/>
            <person name="Borzym K."/>
            <person name="Langer I."/>
            <person name="Beck A."/>
            <person name="Lehrach H."/>
            <person name="Reinhardt R."/>
            <person name="Pohl T.M."/>
            <person name="Eger P."/>
            <person name="Zimmermann W."/>
            <person name="Wedler H."/>
            <person name="Wambutt R."/>
            <person name="Purnelle B."/>
            <person name="Goffeau A."/>
            <person name="Cadieu E."/>
            <person name="Dreano S."/>
            <person name="Gloux S."/>
            <person name="Lelaure V."/>
            <person name="Mottier S."/>
            <person name="Galibert F."/>
            <person name="Aves S.J."/>
            <person name="Xiang Z."/>
            <person name="Hunt C."/>
            <person name="Moore K."/>
            <person name="Hurst S.M."/>
            <person name="Lucas M."/>
            <person name="Rochet M."/>
            <person name="Gaillardin C."/>
            <person name="Tallada V.A."/>
            <person name="Garzon A."/>
            <person name="Thode G."/>
            <person name="Daga R.R."/>
            <person name="Cruzado L."/>
            <person name="Jimenez J."/>
            <person name="Sanchez M."/>
            <person name="del Rey F."/>
            <person name="Benito J."/>
            <person name="Dominguez A."/>
            <person name="Revuelta J.L."/>
            <person name="Moreno S."/>
            <person name="Armstrong J."/>
            <person name="Forsburg S.L."/>
            <person name="Cerutti L."/>
            <person name="Lowe T."/>
            <person name="McCombie W.R."/>
            <person name="Paulsen I."/>
            <person name="Potashkin J."/>
            <person name="Shpakovski G.V."/>
            <person name="Ussery D."/>
            <person name="Barrell B.G."/>
            <person name="Nurse P."/>
        </authorList>
    </citation>
    <scope>NUCLEOTIDE SEQUENCE [LARGE SCALE GENOMIC DNA]</scope>
    <source>
        <strain>972 / ATCC 24843</strain>
    </source>
</reference>
<dbReference type="EMBL" id="CU329670">
    <property type="protein sequence ID" value="CAC36898.1"/>
    <property type="molecule type" value="Genomic_DNA"/>
</dbReference>
<dbReference type="RefSeq" id="NP_593989.1">
    <property type="nucleotide sequence ID" value="NM_001019415.2"/>
</dbReference>
<dbReference type="SMR" id="Q9C0Z0"/>
<dbReference type="BioGRID" id="279841">
    <property type="interactions" value="15"/>
</dbReference>
<dbReference type="FunCoup" id="Q9C0Z0">
    <property type="interactions" value="24"/>
</dbReference>
<dbReference type="STRING" id="284812.Q9C0Z0"/>
<dbReference type="iPTMnet" id="Q9C0Z0"/>
<dbReference type="PaxDb" id="4896-SPAPB24D3.02c.1"/>
<dbReference type="EnsemblFungi" id="SPAPB24D3.02c.1">
    <property type="protein sequence ID" value="SPAPB24D3.02c.1:pep"/>
    <property type="gene ID" value="SPAPB24D3.02c"/>
</dbReference>
<dbReference type="KEGG" id="spo:2543419"/>
<dbReference type="PomBase" id="SPAPB24D3.02c"/>
<dbReference type="VEuPathDB" id="FungiDB:SPAPB24D3.02c"/>
<dbReference type="eggNOG" id="KOG1289">
    <property type="taxonomic scope" value="Eukaryota"/>
</dbReference>
<dbReference type="HOGENOM" id="CLU_004495_0_3_1"/>
<dbReference type="InParanoid" id="Q9C0Z0"/>
<dbReference type="OMA" id="PGKFYCG"/>
<dbReference type="PhylomeDB" id="Q9C0Z0"/>
<dbReference type="PRO" id="PR:Q9C0Z0"/>
<dbReference type="Proteomes" id="UP000002485">
    <property type="component" value="Chromosome I"/>
</dbReference>
<dbReference type="GO" id="GO:0005737">
    <property type="term" value="C:cytoplasm"/>
    <property type="evidence" value="ECO:0007005"/>
    <property type="project" value="PomBase"/>
</dbReference>
<dbReference type="GO" id="GO:0016020">
    <property type="term" value="C:membrane"/>
    <property type="evidence" value="ECO:0007669"/>
    <property type="project" value="UniProtKB-SubCell"/>
</dbReference>
<dbReference type="GO" id="GO:0015171">
    <property type="term" value="F:amino acid transmembrane transporter activity"/>
    <property type="evidence" value="ECO:0000255"/>
    <property type="project" value="PomBase"/>
</dbReference>
<dbReference type="GO" id="GO:0015185">
    <property type="term" value="F:gamma-aminobutyric acid transmembrane transporter activity"/>
    <property type="evidence" value="ECO:0000318"/>
    <property type="project" value="GO_Central"/>
</dbReference>
<dbReference type="GO" id="GO:0003333">
    <property type="term" value="P:amino acid transmembrane transport"/>
    <property type="evidence" value="ECO:0000255"/>
    <property type="project" value="PomBase"/>
</dbReference>
<dbReference type="GO" id="GO:0015812">
    <property type="term" value="P:gamma-aminobutyric acid transport"/>
    <property type="evidence" value="ECO:0000318"/>
    <property type="project" value="GO_Central"/>
</dbReference>
<dbReference type="FunFam" id="1.20.1740.10:FF:000046">
    <property type="entry name" value="Amino-acid permease, putative"/>
    <property type="match status" value="1"/>
</dbReference>
<dbReference type="Gene3D" id="1.20.1740.10">
    <property type="entry name" value="Amino acid/polyamine transporter I"/>
    <property type="match status" value="1"/>
</dbReference>
<dbReference type="InterPro" id="IPR002293">
    <property type="entry name" value="AA/rel_permease1"/>
</dbReference>
<dbReference type="PANTHER" id="PTHR45649">
    <property type="entry name" value="AMINO-ACID PERMEASE BAT1"/>
    <property type="match status" value="1"/>
</dbReference>
<dbReference type="PANTHER" id="PTHR45649:SF6">
    <property type="entry name" value="GABA-SPECIFIC PERMEASE"/>
    <property type="match status" value="1"/>
</dbReference>
<dbReference type="Pfam" id="PF13520">
    <property type="entry name" value="AA_permease_2"/>
    <property type="match status" value="1"/>
</dbReference>
<dbReference type="PIRSF" id="PIRSF006060">
    <property type="entry name" value="AA_transporter"/>
    <property type="match status" value="1"/>
</dbReference>
<sequence>MDETIGMKKEFHDISVGDIEVGESAPVTEDDKMLLNLGYKQEFKREFSLLAVFGQSFGSMGLCPSLVGSMAFSMNCGAGGMVWSWFVGATCLLPIAFALSELASSMPTSGSLYFWTAYLSPPKYRAFLSWFLGYVLALAYSTGFASTIYAAAGLVQATASVANPSYAPTKYEEYGIYVALSFACSALIVLPTKFLARFSSFNVVFQICTILIFIISLAASSTSETRNTGSYIFGNFENYSGWTNMGWSFILCFTTPVWVLSGFESCATIVEEAKNASKAAPIAIISSLTVSLFMGFCIMITIAGTMGHDFSSILNTPYGEPVSQVLYNNLGKRGAVGVSAVLIIALCFNCSALCLASSREIFAFARDKGLPGSWIFRKLTPGGIPLNAILLVNLYTIIVGLLMLVNVTAISSIFNLAIIAFFISYSLPLVCRLLFNRLNPGKFYCGKFSKPISIVAVAWLWFMALMLLFPSYQNPNKVEMNWAIVVLGFTVFFCVGYYYLPKYGGKTFFKGPVKTVDENVTEGVTVDFQADHVSKEDDGKSYN</sequence>
<evidence type="ECO:0000255" key="1"/>
<evidence type="ECO:0000312" key="2">
    <source>
        <dbReference type="EMBL" id="CAC36898.1"/>
    </source>
</evidence>
<feature type="chain" id="PRO_0000310829" description="Uncharacterized amino-acid permease PB24D3.02c">
    <location>
        <begin position="1"/>
        <end position="543"/>
    </location>
</feature>
<feature type="transmembrane region" description="Helical" evidence="1">
    <location>
        <begin position="47"/>
        <end position="67"/>
    </location>
</feature>
<feature type="transmembrane region" description="Helical" evidence="1">
    <location>
        <begin position="79"/>
        <end position="99"/>
    </location>
</feature>
<feature type="transmembrane region" description="Helical" evidence="1">
    <location>
        <begin position="126"/>
        <end position="146"/>
    </location>
</feature>
<feature type="transmembrane region" description="Helical" evidence="1">
    <location>
        <begin position="176"/>
        <end position="196"/>
    </location>
</feature>
<feature type="transmembrane region" description="Helical" evidence="1">
    <location>
        <begin position="198"/>
        <end position="218"/>
    </location>
</feature>
<feature type="transmembrane region" description="Helical" evidence="1">
    <location>
        <begin position="249"/>
        <end position="269"/>
    </location>
</feature>
<feature type="transmembrane region" description="Helical" evidence="1">
    <location>
        <begin position="282"/>
        <end position="302"/>
    </location>
</feature>
<feature type="transmembrane region" description="Helical" evidence="1">
    <location>
        <begin position="335"/>
        <end position="355"/>
    </location>
</feature>
<feature type="transmembrane region" description="Helical" evidence="1">
    <location>
        <begin position="384"/>
        <end position="404"/>
    </location>
</feature>
<feature type="transmembrane region" description="Helical" evidence="1">
    <location>
        <begin position="410"/>
        <end position="430"/>
    </location>
</feature>
<feature type="transmembrane region" description="Helical" evidence="1">
    <location>
        <begin position="452"/>
        <end position="472"/>
    </location>
</feature>
<feature type="transmembrane region" description="Helical" evidence="1">
    <location>
        <begin position="480"/>
        <end position="500"/>
    </location>
</feature>
<feature type="glycosylation site" description="N-linked (GlcNAc...) asparagine" evidence="1">
    <location>
        <position position="275"/>
    </location>
</feature>
<feature type="glycosylation site" description="N-linked (GlcNAc...) asparagine" evidence="1">
    <location>
        <position position="406"/>
    </location>
</feature>
<feature type="glycosylation site" description="N-linked (GlcNAc...) asparagine" evidence="1">
    <location>
        <position position="519"/>
    </location>
</feature>
<accession>Q9C0Z0</accession>